<reference key="1">
    <citation type="journal article" date="2011" name="Stand. Genomic Sci.">
        <title>Complete genome sequence of Rhodospirillum rubrum type strain (S1).</title>
        <authorList>
            <person name="Munk A.C."/>
            <person name="Copeland A."/>
            <person name="Lucas S."/>
            <person name="Lapidus A."/>
            <person name="Del Rio T.G."/>
            <person name="Barry K."/>
            <person name="Detter J.C."/>
            <person name="Hammon N."/>
            <person name="Israni S."/>
            <person name="Pitluck S."/>
            <person name="Brettin T."/>
            <person name="Bruce D."/>
            <person name="Han C."/>
            <person name="Tapia R."/>
            <person name="Gilna P."/>
            <person name="Schmutz J."/>
            <person name="Larimer F."/>
            <person name="Land M."/>
            <person name="Kyrpides N.C."/>
            <person name="Mavromatis K."/>
            <person name="Richardson P."/>
            <person name="Rohde M."/>
            <person name="Goeker M."/>
            <person name="Klenk H.P."/>
            <person name="Zhang Y."/>
            <person name="Roberts G.P."/>
            <person name="Reslewic S."/>
            <person name="Schwartz D.C."/>
        </authorList>
    </citation>
    <scope>NUCLEOTIDE SEQUENCE [LARGE SCALE GENOMIC DNA]</scope>
    <source>
        <strain>ATCC 11170 / ATH 1.1.1 / DSM 467 / LMG 4362 / NCIMB 8255 / S1</strain>
    </source>
</reference>
<feature type="chain" id="PRO_0000236663" description="Phosphoribosylformylglycinamidine synthase subunit PurL">
    <location>
        <begin position="1"/>
        <end position="740"/>
    </location>
</feature>
<feature type="active site" evidence="1">
    <location>
        <position position="53"/>
    </location>
</feature>
<feature type="active site" description="Proton acceptor" evidence="1">
    <location>
        <position position="99"/>
    </location>
</feature>
<feature type="binding site" evidence="1">
    <location>
        <position position="56"/>
    </location>
    <ligand>
        <name>ATP</name>
        <dbReference type="ChEBI" id="CHEBI:30616"/>
    </ligand>
</feature>
<feature type="binding site" evidence="1">
    <location>
        <position position="95"/>
    </location>
    <ligand>
        <name>ATP</name>
        <dbReference type="ChEBI" id="CHEBI:30616"/>
    </ligand>
</feature>
<feature type="binding site" evidence="1">
    <location>
        <position position="97"/>
    </location>
    <ligand>
        <name>Mg(2+)</name>
        <dbReference type="ChEBI" id="CHEBI:18420"/>
        <label>1</label>
    </ligand>
</feature>
<feature type="binding site" evidence="1">
    <location>
        <begin position="98"/>
        <end position="101"/>
    </location>
    <ligand>
        <name>substrate</name>
    </ligand>
</feature>
<feature type="binding site" evidence="1">
    <location>
        <position position="120"/>
    </location>
    <ligand>
        <name>substrate</name>
    </ligand>
</feature>
<feature type="binding site" evidence="1">
    <location>
        <position position="121"/>
    </location>
    <ligand>
        <name>Mg(2+)</name>
        <dbReference type="ChEBI" id="CHEBI:18420"/>
        <label>2</label>
    </ligand>
</feature>
<feature type="binding site" evidence="1">
    <location>
        <position position="244"/>
    </location>
    <ligand>
        <name>substrate</name>
    </ligand>
</feature>
<feature type="binding site" evidence="1">
    <location>
        <position position="272"/>
    </location>
    <ligand>
        <name>Mg(2+)</name>
        <dbReference type="ChEBI" id="CHEBI:18420"/>
        <label>2</label>
    </ligand>
</feature>
<feature type="binding site" evidence="1">
    <location>
        <begin position="316"/>
        <end position="318"/>
    </location>
    <ligand>
        <name>substrate</name>
    </ligand>
</feature>
<feature type="binding site" evidence="1">
    <location>
        <position position="497"/>
    </location>
    <ligand>
        <name>ATP</name>
        <dbReference type="ChEBI" id="CHEBI:30616"/>
    </ligand>
</feature>
<feature type="binding site" evidence="1">
    <location>
        <position position="534"/>
    </location>
    <ligand>
        <name>ATP</name>
        <dbReference type="ChEBI" id="CHEBI:30616"/>
    </ligand>
</feature>
<feature type="binding site" evidence="1">
    <location>
        <position position="535"/>
    </location>
    <ligand>
        <name>Mg(2+)</name>
        <dbReference type="ChEBI" id="CHEBI:18420"/>
        <label>1</label>
    </ligand>
</feature>
<feature type="binding site" evidence="1">
    <location>
        <position position="537"/>
    </location>
    <ligand>
        <name>substrate</name>
    </ligand>
</feature>
<evidence type="ECO:0000255" key="1">
    <source>
        <dbReference type="HAMAP-Rule" id="MF_00420"/>
    </source>
</evidence>
<accession>Q2RWI3</accession>
<proteinExistence type="inferred from homology"/>
<keyword id="KW-0067">ATP-binding</keyword>
<keyword id="KW-0963">Cytoplasm</keyword>
<keyword id="KW-0436">Ligase</keyword>
<keyword id="KW-0460">Magnesium</keyword>
<keyword id="KW-0479">Metal-binding</keyword>
<keyword id="KW-0547">Nucleotide-binding</keyword>
<keyword id="KW-0658">Purine biosynthesis</keyword>
<keyword id="KW-1185">Reference proteome</keyword>
<sequence>MSQSASTPATPITAKIVAEHGLTEAEYAKVLAIMGREPNLVELGIFSVMWSEHCSYKSSKKWLKTLPTTAPWVIQGPGENAGVIDIGDGLTAIFKMESHNHPSYIEPYQGAATGVGGILRDVFTMGARPVANLNALRFGDPSDPRTRHLISGVVAGIGGYGNCVGVPTVGGEVNFHASFNGNNLVNAMTVGVARADRIFYSAAAGIGNSVVYVGSKTGRDGIHGATMASAEFSEDSEEKRPTVQVGDPFTEKLLIEACLELMNTDAIVAIQDMGAAGLTSSCFEMASKGGMGVDLALDRVPMREEGMTPYELMLSESQERMLMVLKPGKEDMARALFEKWELDFAIIGTLTDSGRMVLTWHGEVVGDLPIDPLAAASPEYDRPWEPTPMAAAADLSGAEDTPWSEALLRLIGCPDVASRRWIWEQYDHLVMGNTLQRPGGDAAVIRLDEAPGKGLAMTTDCTPRYVHADPVEGGKQAVAEAWRNLTAVGARPLAITDNMNFGNPEKPRIMGQFVGACQGISEACLALDFPVVSGNVSLYNETNGQAILPTPTIGGVGVLDNVEASVSIALKAAGEAILVAGGFHGSTGAWLGQSLFLREILGREEGAPPPVDLAAERKVGDFVRGLILGASVTACHDLSDGGLLVALAEMAMAGDLGAELTLEGHPDNGRLFGEDQGRYLLTVAEGDRDAVVAAAEAAGVPLRVVGTTGGDALVVNGFVGPSVAALRKVHEEWLPTYMAG</sequence>
<comment type="function">
    <text evidence="1">Part of the phosphoribosylformylglycinamidine synthase complex involved in the purines biosynthetic pathway. Catalyzes the ATP-dependent conversion of formylglycinamide ribonucleotide (FGAR) and glutamine to yield formylglycinamidine ribonucleotide (FGAM) and glutamate. The FGAM synthase complex is composed of three subunits. PurQ produces an ammonia molecule by converting glutamine to glutamate. PurL transfers the ammonia molecule to FGAR to form FGAM in an ATP-dependent manner. PurS interacts with PurQ and PurL and is thought to assist in the transfer of the ammonia molecule from PurQ to PurL.</text>
</comment>
<comment type="catalytic activity">
    <reaction evidence="1">
        <text>N(2)-formyl-N(1)-(5-phospho-beta-D-ribosyl)glycinamide + L-glutamine + ATP + H2O = 2-formamido-N(1)-(5-O-phospho-beta-D-ribosyl)acetamidine + L-glutamate + ADP + phosphate + H(+)</text>
        <dbReference type="Rhea" id="RHEA:17129"/>
        <dbReference type="ChEBI" id="CHEBI:15377"/>
        <dbReference type="ChEBI" id="CHEBI:15378"/>
        <dbReference type="ChEBI" id="CHEBI:29985"/>
        <dbReference type="ChEBI" id="CHEBI:30616"/>
        <dbReference type="ChEBI" id="CHEBI:43474"/>
        <dbReference type="ChEBI" id="CHEBI:58359"/>
        <dbReference type="ChEBI" id="CHEBI:147286"/>
        <dbReference type="ChEBI" id="CHEBI:147287"/>
        <dbReference type="ChEBI" id="CHEBI:456216"/>
        <dbReference type="EC" id="6.3.5.3"/>
    </reaction>
</comment>
<comment type="pathway">
    <text evidence="1">Purine metabolism; IMP biosynthesis via de novo pathway; 5-amino-1-(5-phospho-D-ribosyl)imidazole from N(2)-formyl-N(1)-(5-phospho-D-ribosyl)glycinamide: step 1/2.</text>
</comment>
<comment type="subunit">
    <text evidence="1">Monomer. Part of the FGAM synthase complex composed of 1 PurL, 1 PurQ and 2 PurS subunits.</text>
</comment>
<comment type="subcellular location">
    <subcellularLocation>
        <location evidence="1">Cytoplasm</location>
    </subcellularLocation>
</comment>
<comment type="similarity">
    <text evidence="1">Belongs to the FGAMS family.</text>
</comment>
<gene>
    <name evidence="1" type="primary">purL</name>
    <name type="ordered locus">Rru_A0708</name>
</gene>
<protein>
    <recommendedName>
        <fullName evidence="1">Phosphoribosylformylglycinamidine synthase subunit PurL</fullName>
        <shortName evidence="1">FGAM synthase</shortName>
        <ecNumber evidence="1">6.3.5.3</ecNumber>
    </recommendedName>
    <alternativeName>
        <fullName evidence="1">Formylglycinamide ribonucleotide amidotransferase subunit II</fullName>
        <shortName evidence="1">FGAR amidotransferase II</shortName>
        <shortName evidence="1">FGAR-AT II</shortName>
    </alternativeName>
    <alternativeName>
        <fullName evidence="1">Glutamine amidotransferase PurL</fullName>
    </alternativeName>
    <alternativeName>
        <fullName evidence="1">Phosphoribosylformylglycinamidine synthase subunit II</fullName>
    </alternativeName>
</protein>
<name>PURL_RHORT</name>
<organism>
    <name type="scientific">Rhodospirillum rubrum (strain ATCC 11170 / ATH 1.1.1 / DSM 467 / LMG 4362 / NCIMB 8255 / S1)</name>
    <dbReference type="NCBI Taxonomy" id="269796"/>
    <lineage>
        <taxon>Bacteria</taxon>
        <taxon>Pseudomonadati</taxon>
        <taxon>Pseudomonadota</taxon>
        <taxon>Alphaproteobacteria</taxon>
        <taxon>Rhodospirillales</taxon>
        <taxon>Rhodospirillaceae</taxon>
        <taxon>Rhodospirillum</taxon>
    </lineage>
</organism>
<dbReference type="EC" id="6.3.5.3" evidence="1"/>
<dbReference type="EMBL" id="CP000230">
    <property type="protein sequence ID" value="ABC21512.1"/>
    <property type="molecule type" value="Genomic_DNA"/>
</dbReference>
<dbReference type="RefSeq" id="WP_011388466.1">
    <property type="nucleotide sequence ID" value="NC_007643.1"/>
</dbReference>
<dbReference type="RefSeq" id="YP_425799.1">
    <property type="nucleotide sequence ID" value="NC_007643.1"/>
</dbReference>
<dbReference type="SMR" id="Q2RWI3"/>
<dbReference type="STRING" id="269796.Rru_A0708"/>
<dbReference type="EnsemblBacteria" id="ABC21512">
    <property type="protein sequence ID" value="ABC21512"/>
    <property type="gene ID" value="Rru_A0708"/>
</dbReference>
<dbReference type="KEGG" id="rru:Rru_A0708"/>
<dbReference type="PATRIC" id="fig|269796.9.peg.760"/>
<dbReference type="eggNOG" id="COG0046">
    <property type="taxonomic scope" value="Bacteria"/>
</dbReference>
<dbReference type="HOGENOM" id="CLU_003100_0_1_5"/>
<dbReference type="PhylomeDB" id="Q2RWI3"/>
<dbReference type="UniPathway" id="UPA00074">
    <property type="reaction ID" value="UER00128"/>
</dbReference>
<dbReference type="Proteomes" id="UP000001929">
    <property type="component" value="Chromosome"/>
</dbReference>
<dbReference type="GO" id="GO:0005737">
    <property type="term" value="C:cytoplasm"/>
    <property type="evidence" value="ECO:0007669"/>
    <property type="project" value="UniProtKB-SubCell"/>
</dbReference>
<dbReference type="GO" id="GO:0005524">
    <property type="term" value="F:ATP binding"/>
    <property type="evidence" value="ECO:0007669"/>
    <property type="project" value="UniProtKB-UniRule"/>
</dbReference>
<dbReference type="GO" id="GO:0000287">
    <property type="term" value="F:magnesium ion binding"/>
    <property type="evidence" value="ECO:0007669"/>
    <property type="project" value="UniProtKB-UniRule"/>
</dbReference>
<dbReference type="GO" id="GO:0004642">
    <property type="term" value="F:phosphoribosylformylglycinamidine synthase activity"/>
    <property type="evidence" value="ECO:0007669"/>
    <property type="project" value="UniProtKB-UniRule"/>
</dbReference>
<dbReference type="GO" id="GO:0006189">
    <property type="term" value="P:'de novo' IMP biosynthetic process"/>
    <property type="evidence" value="ECO:0007669"/>
    <property type="project" value="UniProtKB-UniRule"/>
</dbReference>
<dbReference type="CDD" id="cd02203">
    <property type="entry name" value="PurL_repeat1"/>
    <property type="match status" value="1"/>
</dbReference>
<dbReference type="CDD" id="cd02204">
    <property type="entry name" value="PurL_repeat2"/>
    <property type="match status" value="1"/>
</dbReference>
<dbReference type="FunFam" id="3.30.1330.10:FF:000004">
    <property type="entry name" value="Phosphoribosylformylglycinamidine synthase subunit PurL"/>
    <property type="match status" value="1"/>
</dbReference>
<dbReference type="Gene3D" id="3.90.650.10">
    <property type="entry name" value="PurM-like C-terminal domain"/>
    <property type="match status" value="2"/>
</dbReference>
<dbReference type="Gene3D" id="3.30.1330.10">
    <property type="entry name" value="PurM-like, N-terminal domain"/>
    <property type="match status" value="2"/>
</dbReference>
<dbReference type="HAMAP" id="MF_00420">
    <property type="entry name" value="PurL_2"/>
    <property type="match status" value="1"/>
</dbReference>
<dbReference type="InterPro" id="IPR010074">
    <property type="entry name" value="PRibForGlyAmidine_synth_PurL"/>
</dbReference>
<dbReference type="InterPro" id="IPR041609">
    <property type="entry name" value="PurL_linker"/>
</dbReference>
<dbReference type="InterPro" id="IPR010918">
    <property type="entry name" value="PurM-like_C_dom"/>
</dbReference>
<dbReference type="InterPro" id="IPR036676">
    <property type="entry name" value="PurM-like_C_sf"/>
</dbReference>
<dbReference type="InterPro" id="IPR016188">
    <property type="entry name" value="PurM-like_N"/>
</dbReference>
<dbReference type="InterPro" id="IPR036921">
    <property type="entry name" value="PurM-like_N_sf"/>
</dbReference>
<dbReference type="NCBIfam" id="TIGR01736">
    <property type="entry name" value="FGAM_synth_II"/>
    <property type="match status" value="1"/>
</dbReference>
<dbReference type="NCBIfam" id="NF002290">
    <property type="entry name" value="PRK01213.1"/>
    <property type="match status" value="1"/>
</dbReference>
<dbReference type="PANTHER" id="PTHR43555">
    <property type="entry name" value="PHOSPHORIBOSYLFORMYLGLYCINAMIDINE SYNTHASE SUBUNIT PURL"/>
    <property type="match status" value="1"/>
</dbReference>
<dbReference type="PANTHER" id="PTHR43555:SF1">
    <property type="entry name" value="PHOSPHORIBOSYLFORMYLGLYCINAMIDINE SYNTHASE SUBUNIT PURL"/>
    <property type="match status" value="1"/>
</dbReference>
<dbReference type="Pfam" id="PF00586">
    <property type="entry name" value="AIRS"/>
    <property type="match status" value="2"/>
</dbReference>
<dbReference type="Pfam" id="PF02769">
    <property type="entry name" value="AIRS_C"/>
    <property type="match status" value="2"/>
</dbReference>
<dbReference type="Pfam" id="PF18072">
    <property type="entry name" value="FGAR-AT_linker"/>
    <property type="match status" value="1"/>
</dbReference>
<dbReference type="PIRSF" id="PIRSF001587">
    <property type="entry name" value="FGAM_synthase_II"/>
    <property type="match status" value="1"/>
</dbReference>
<dbReference type="SUPFAM" id="SSF56042">
    <property type="entry name" value="PurM C-terminal domain-like"/>
    <property type="match status" value="2"/>
</dbReference>
<dbReference type="SUPFAM" id="SSF55326">
    <property type="entry name" value="PurM N-terminal domain-like"/>
    <property type="match status" value="2"/>
</dbReference>